<organism>
    <name type="scientific">Escherichia coli O157:H7</name>
    <dbReference type="NCBI Taxonomy" id="83334"/>
    <lineage>
        <taxon>Bacteria</taxon>
        <taxon>Pseudomonadati</taxon>
        <taxon>Pseudomonadota</taxon>
        <taxon>Gammaproteobacteria</taxon>
        <taxon>Enterobacterales</taxon>
        <taxon>Enterobacteriaceae</taxon>
        <taxon>Escherichia</taxon>
    </lineage>
</organism>
<gene>
    <name type="primary">yncI</name>
    <name type="ordered locus">Z0275</name>
    <name type="ordered locus">ECs0245</name>
</gene>
<keyword id="KW-0233">DNA recombination</keyword>
<keyword id="KW-0238">DNA-binding</keyword>
<keyword id="KW-1185">Reference proteome</keyword>
<keyword id="KW-0814">Transposable element</keyword>
<keyword id="KW-0815">Transposition</keyword>
<comment type="similarity">
    <text evidence="1">Belongs to the transposase 11 family.</text>
</comment>
<proteinExistence type="inferred from homology"/>
<accession>Q8X7R5</accession>
<accession>Q7AHH5</accession>
<name>YNCI_ECO57</name>
<reference key="1">
    <citation type="journal article" date="2001" name="Nature">
        <title>Genome sequence of enterohaemorrhagic Escherichia coli O157:H7.</title>
        <authorList>
            <person name="Perna N.T."/>
            <person name="Plunkett G. III"/>
            <person name="Burland V."/>
            <person name="Mau B."/>
            <person name="Glasner J.D."/>
            <person name="Rose D.J."/>
            <person name="Mayhew G.F."/>
            <person name="Evans P.S."/>
            <person name="Gregor J."/>
            <person name="Kirkpatrick H.A."/>
            <person name="Posfai G."/>
            <person name="Hackett J."/>
            <person name="Klink S."/>
            <person name="Boutin A."/>
            <person name="Shao Y."/>
            <person name="Miller L."/>
            <person name="Grotbeck E.J."/>
            <person name="Davis N.W."/>
            <person name="Lim A."/>
            <person name="Dimalanta E.T."/>
            <person name="Potamousis K."/>
            <person name="Apodaca J."/>
            <person name="Anantharaman T.S."/>
            <person name="Lin J."/>
            <person name="Yen G."/>
            <person name="Schwartz D.C."/>
            <person name="Welch R.A."/>
            <person name="Blattner F.R."/>
        </authorList>
    </citation>
    <scope>NUCLEOTIDE SEQUENCE [LARGE SCALE GENOMIC DNA]</scope>
    <source>
        <strain>O157:H7 / EDL933 / ATCC 700927 / EHEC</strain>
    </source>
</reference>
<reference key="2">
    <citation type="journal article" date="2001" name="DNA Res.">
        <title>Complete genome sequence of enterohemorrhagic Escherichia coli O157:H7 and genomic comparison with a laboratory strain K-12.</title>
        <authorList>
            <person name="Hayashi T."/>
            <person name="Makino K."/>
            <person name="Ohnishi M."/>
            <person name="Kurokawa K."/>
            <person name="Ishii K."/>
            <person name="Yokoyama K."/>
            <person name="Han C.-G."/>
            <person name="Ohtsubo E."/>
            <person name="Nakayama K."/>
            <person name="Murata T."/>
            <person name="Tanaka M."/>
            <person name="Tobe T."/>
            <person name="Iida T."/>
            <person name="Takami H."/>
            <person name="Honda T."/>
            <person name="Sasakawa C."/>
            <person name="Ogasawara N."/>
            <person name="Yasunaga T."/>
            <person name="Kuhara S."/>
            <person name="Shiba T."/>
            <person name="Hattori M."/>
            <person name="Shinagawa H."/>
        </authorList>
    </citation>
    <scope>NUCLEOTIDE SEQUENCE [LARGE SCALE GENOMIC DNA]</scope>
    <source>
        <strain>O157:H7 / Sakai / RIMD 0509952 / EHEC</strain>
    </source>
</reference>
<feature type="chain" id="PRO_0000263028" description="Putative transposase YncI">
    <location>
        <begin position="1"/>
        <end position="390"/>
    </location>
</feature>
<protein>
    <recommendedName>
        <fullName>Putative transposase YncI</fullName>
    </recommendedName>
</protein>
<sequence length="390" mass="44238">MSIQSLLDYISVIPDIRQQGKVKHKLSDILFLTVCAVIAGADEWQEIEDFGHERLEWLKKYGDFDNGIPVDDTIARVVSNIDSLAFEKIFIEWMQECHEITDGEIIAIDGKTIRGSFDKGKRKGAIHMVSAFSNENGVVLGQVKTEAKSNEITAIPELLNLLDLKKNLITIDAMGCQKDIASKIKDKKADYLLAVKGNQGKLHHAFEEKFPVNVFSNYKGDSFSTQEISHGRKETRLHIVSNVTPEFCDFEFEWKGLKKLCVALSFRQKKEDKSAEGVSIRYYISSKDMDAKEFAHAIRAHWLIEHSLHWVLDVKMNEDASRIRRGNAAEIISGIKKMALNLLRDCKDIKGGVKRKRKKVALNTCYIEEVLASCSELGFRTDKMKNLTQI</sequence>
<evidence type="ECO:0000305" key="1"/>
<dbReference type="EMBL" id="AE005174">
    <property type="protein sequence ID" value="AAG54543.1"/>
    <property type="molecule type" value="Genomic_DNA"/>
</dbReference>
<dbReference type="EMBL" id="BA000007">
    <property type="protein sequence ID" value="BAB33668.1"/>
    <property type="molecule type" value="Genomic_DNA"/>
</dbReference>
<dbReference type="PIR" id="C85510">
    <property type="entry name" value="C85510"/>
</dbReference>
<dbReference type="PIR" id="E90659">
    <property type="entry name" value="E90659"/>
</dbReference>
<dbReference type="RefSeq" id="NP_308272.1">
    <property type="nucleotide sequence ID" value="NC_002695.1"/>
</dbReference>
<dbReference type="RefSeq" id="WP_000027427.1">
    <property type="nucleotide sequence ID" value="NZ_SWKA01000005.1"/>
</dbReference>
<dbReference type="STRING" id="155864.Z0275"/>
<dbReference type="GeneID" id="914277"/>
<dbReference type="KEGG" id="ece:Z0275"/>
<dbReference type="KEGG" id="ecs:ECs_0245"/>
<dbReference type="PATRIC" id="fig|386585.9.peg.345"/>
<dbReference type="eggNOG" id="COG5433">
    <property type="taxonomic scope" value="Bacteria"/>
</dbReference>
<dbReference type="HOGENOM" id="CLU_046404_0_1_6"/>
<dbReference type="OMA" id="HYIVIVK"/>
<dbReference type="Proteomes" id="UP000000558">
    <property type="component" value="Chromosome"/>
</dbReference>
<dbReference type="Proteomes" id="UP000002519">
    <property type="component" value="Chromosome"/>
</dbReference>
<dbReference type="GO" id="GO:0003677">
    <property type="term" value="F:DNA binding"/>
    <property type="evidence" value="ECO:0007669"/>
    <property type="project" value="UniProtKB-KW"/>
</dbReference>
<dbReference type="GO" id="GO:0004803">
    <property type="term" value="F:transposase activity"/>
    <property type="evidence" value="ECO:0007669"/>
    <property type="project" value="InterPro"/>
</dbReference>
<dbReference type="GO" id="GO:0006313">
    <property type="term" value="P:DNA transposition"/>
    <property type="evidence" value="ECO:0007669"/>
    <property type="project" value="InterPro"/>
</dbReference>
<dbReference type="InterPro" id="IPR047647">
    <property type="entry name" value="ISAs1_transpos"/>
</dbReference>
<dbReference type="InterPro" id="IPR002559">
    <property type="entry name" value="Transposase_11"/>
</dbReference>
<dbReference type="InterPro" id="IPR051698">
    <property type="entry name" value="Transposase_11-like"/>
</dbReference>
<dbReference type="InterPro" id="IPR032806">
    <property type="entry name" value="YbfD_N"/>
</dbReference>
<dbReference type="NCBIfam" id="NF033564">
    <property type="entry name" value="transpos_ISAs1"/>
    <property type="match status" value="1"/>
</dbReference>
<dbReference type="PANTHER" id="PTHR30298">
    <property type="entry name" value="H REPEAT-ASSOCIATED PREDICTED TRANSPOSASE"/>
    <property type="match status" value="1"/>
</dbReference>
<dbReference type="PANTHER" id="PTHR30298:SF0">
    <property type="entry name" value="PROTEIN YBFL-RELATED"/>
    <property type="match status" value="1"/>
</dbReference>
<dbReference type="Pfam" id="PF01609">
    <property type="entry name" value="DDE_Tnp_1"/>
    <property type="match status" value="1"/>
</dbReference>
<dbReference type="Pfam" id="PF13808">
    <property type="entry name" value="DDE_Tnp_1_assoc"/>
    <property type="match status" value="1"/>
</dbReference>